<proteinExistence type="inferred from homology"/>
<sequence length="272" mass="29449">MGIKTFAPRSHGRRGMTGFDFKEITKTTPEKSLLAPLKKQAARNNHGQITIRHQGGGHKRKYRLVDFKRNKLEVAAKVIAIEYDPNRTCRIALISYIDGAKAYILAPVGLNVGDTVISSDKADIKPGNSLTLGAIPVGTVIHNIELRPGKGGQICRGAGASATLAGKGDKYCQVRMPSGELKQVLTVCRASIGQVGNTDNENINLGKAGRSRWRGIRPSVRGMHMNPVDHPLGGGEGVGKGHHPVTPWGQPCKGFKTRNNKRTNSSIIKRRK</sequence>
<organism>
    <name type="scientific">Bdellovibrio bacteriovorus (strain ATCC 15356 / DSM 50701 / NCIMB 9529 / HD100)</name>
    <dbReference type="NCBI Taxonomy" id="264462"/>
    <lineage>
        <taxon>Bacteria</taxon>
        <taxon>Pseudomonadati</taxon>
        <taxon>Bdellovibrionota</taxon>
        <taxon>Bdellovibrionia</taxon>
        <taxon>Bdellovibrionales</taxon>
        <taxon>Pseudobdellovibrionaceae</taxon>
        <taxon>Bdellovibrio</taxon>
    </lineage>
</organism>
<protein>
    <recommendedName>
        <fullName evidence="1">Large ribosomal subunit protein uL2</fullName>
    </recommendedName>
    <alternativeName>
        <fullName evidence="3">50S ribosomal protein L2</fullName>
    </alternativeName>
</protein>
<reference key="1">
    <citation type="journal article" date="2004" name="Science">
        <title>A predator unmasked: life cycle of Bdellovibrio bacteriovorus from a genomic perspective.</title>
        <authorList>
            <person name="Rendulic S."/>
            <person name="Jagtap P."/>
            <person name="Rosinus A."/>
            <person name="Eppinger M."/>
            <person name="Baar C."/>
            <person name="Lanz C."/>
            <person name="Keller H."/>
            <person name="Lambert C."/>
            <person name="Evans K.J."/>
            <person name="Goesmann A."/>
            <person name="Meyer F."/>
            <person name="Sockett R.E."/>
            <person name="Schuster S.C."/>
        </authorList>
    </citation>
    <scope>NUCLEOTIDE SEQUENCE [LARGE SCALE GENOMIC DNA]</scope>
    <source>
        <strain>ATCC 15356 / DSM 50701 / NCIMB 9529 / HD100</strain>
    </source>
</reference>
<dbReference type="EMBL" id="BX842654">
    <property type="protein sequence ID" value="CAE80745.1"/>
    <property type="molecule type" value="Genomic_DNA"/>
</dbReference>
<dbReference type="RefSeq" id="WP_011165349.1">
    <property type="nucleotide sequence ID" value="NC_005363.1"/>
</dbReference>
<dbReference type="SMR" id="Q6MJ17"/>
<dbReference type="STRING" id="264462.Bd2973"/>
<dbReference type="GeneID" id="93013836"/>
<dbReference type="KEGG" id="bba:Bd2973"/>
<dbReference type="eggNOG" id="COG0090">
    <property type="taxonomic scope" value="Bacteria"/>
</dbReference>
<dbReference type="HOGENOM" id="CLU_036235_2_1_7"/>
<dbReference type="Proteomes" id="UP000008080">
    <property type="component" value="Chromosome"/>
</dbReference>
<dbReference type="GO" id="GO:0015934">
    <property type="term" value="C:large ribosomal subunit"/>
    <property type="evidence" value="ECO:0007669"/>
    <property type="project" value="InterPro"/>
</dbReference>
<dbReference type="GO" id="GO:0019843">
    <property type="term" value="F:rRNA binding"/>
    <property type="evidence" value="ECO:0007669"/>
    <property type="project" value="UniProtKB-UniRule"/>
</dbReference>
<dbReference type="GO" id="GO:0003735">
    <property type="term" value="F:structural constituent of ribosome"/>
    <property type="evidence" value="ECO:0007669"/>
    <property type="project" value="InterPro"/>
</dbReference>
<dbReference type="GO" id="GO:0016740">
    <property type="term" value="F:transferase activity"/>
    <property type="evidence" value="ECO:0007669"/>
    <property type="project" value="InterPro"/>
</dbReference>
<dbReference type="GO" id="GO:0002181">
    <property type="term" value="P:cytoplasmic translation"/>
    <property type="evidence" value="ECO:0007669"/>
    <property type="project" value="TreeGrafter"/>
</dbReference>
<dbReference type="FunFam" id="2.30.30.30:FF:000001">
    <property type="entry name" value="50S ribosomal protein L2"/>
    <property type="match status" value="1"/>
</dbReference>
<dbReference type="FunFam" id="2.40.50.140:FF:000003">
    <property type="entry name" value="50S ribosomal protein L2"/>
    <property type="match status" value="1"/>
</dbReference>
<dbReference type="FunFam" id="4.10.950.10:FF:000001">
    <property type="entry name" value="50S ribosomal protein L2"/>
    <property type="match status" value="1"/>
</dbReference>
<dbReference type="Gene3D" id="2.30.30.30">
    <property type="match status" value="1"/>
</dbReference>
<dbReference type="Gene3D" id="2.40.50.140">
    <property type="entry name" value="Nucleic acid-binding proteins"/>
    <property type="match status" value="1"/>
</dbReference>
<dbReference type="Gene3D" id="4.10.950.10">
    <property type="entry name" value="Ribosomal protein L2, domain 3"/>
    <property type="match status" value="1"/>
</dbReference>
<dbReference type="HAMAP" id="MF_01320_B">
    <property type="entry name" value="Ribosomal_uL2_B"/>
    <property type="match status" value="1"/>
</dbReference>
<dbReference type="InterPro" id="IPR012340">
    <property type="entry name" value="NA-bd_OB-fold"/>
</dbReference>
<dbReference type="InterPro" id="IPR014722">
    <property type="entry name" value="Rib_uL2_dom2"/>
</dbReference>
<dbReference type="InterPro" id="IPR002171">
    <property type="entry name" value="Ribosomal_uL2"/>
</dbReference>
<dbReference type="InterPro" id="IPR005880">
    <property type="entry name" value="Ribosomal_uL2_bac/org-type"/>
</dbReference>
<dbReference type="InterPro" id="IPR022669">
    <property type="entry name" value="Ribosomal_uL2_C"/>
</dbReference>
<dbReference type="InterPro" id="IPR014726">
    <property type="entry name" value="Ribosomal_uL2_dom3"/>
</dbReference>
<dbReference type="InterPro" id="IPR022666">
    <property type="entry name" value="Ribosomal_uL2_RNA-bd_dom"/>
</dbReference>
<dbReference type="InterPro" id="IPR008991">
    <property type="entry name" value="Translation_prot_SH3-like_sf"/>
</dbReference>
<dbReference type="NCBIfam" id="TIGR01171">
    <property type="entry name" value="rplB_bact"/>
    <property type="match status" value="1"/>
</dbReference>
<dbReference type="PANTHER" id="PTHR13691:SF5">
    <property type="entry name" value="LARGE RIBOSOMAL SUBUNIT PROTEIN UL2M"/>
    <property type="match status" value="1"/>
</dbReference>
<dbReference type="PANTHER" id="PTHR13691">
    <property type="entry name" value="RIBOSOMAL PROTEIN L2"/>
    <property type="match status" value="1"/>
</dbReference>
<dbReference type="Pfam" id="PF00181">
    <property type="entry name" value="Ribosomal_L2"/>
    <property type="match status" value="1"/>
</dbReference>
<dbReference type="Pfam" id="PF03947">
    <property type="entry name" value="Ribosomal_L2_C"/>
    <property type="match status" value="1"/>
</dbReference>
<dbReference type="PIRSF" id="PIRSF002158">
    <property type="entry name" value="Ribosomal_L2"/>
    <property type="match status" value="1"/>
</dbReference>
<dbReference type="SMART" id="SM01383">
    <property type="entry name" value="Ribosomal_L2"/>
    <property type="match status" value="1"/>
</dbReference>
<dbReference type="SMART" id="SM01382">
    <property type="entry name" value="Ribosomal_L2_C"/>
    <property type="match status" value="1"/>
</dbReference>
<dbReference type="SUPFAM" id="SSF50249">
    <property type="entry name" value="Nucleic acid-binding proteins"/>
    <property type="match status" value="1"/>
</dbReference>
<dbReference type="SUPFAM" id="SSF50104">
    <property type="entry name" value="Translation proteins SH3-like domain"/>
    <property type="match status" value="1"/>
</dbReference>
<gene>
    <name evidence="1" type="primary">rplB</name>
    <name type="ordered locus">Bd2973</name>
</gene>
<feature type="chain" id="PRO_0000237158" description="Large ribosomal subunit protein uL2">
    <location>
        <begin position="1"/>
        <end position="272"/>
    </location>
</feature>
<feature type="region of interest" description="Disordered" evidence="2">
    <location>
        <begin position="247"/>
        <end position="272"/>
    </location>
</feature>
<feature type="compositionally biased region" description="Polar residues" evidence="2">
    <location>
        <begin position="262"/>
        <end position="272"/>
    </location>
</feature>
<accession>Q6MJ17</accession>
<comment type="function">
    <text evidence="1">One of the primary rRNA binding proteins. Required for association of the 30S and 50S subunits to form the 70S ribosome, for tRNA binding and peptide bond formation. It has been suggested to have peptidyltransferase activity; this is somewhat controversial. Makes several contacts with the 16S rRNA in the 70S ribosome.</text>
</comment>
<comment type="subunit">
    <text evidence="1">Part of the 50S ribosomal subunit. Forms a bridge to the 30S subunit in the 70S ribosome.</text>
</comment>
<comment type="similarity">
    <text evidence="1">Belongs to the universal ribosomal protein uL2 family.</text>
</comment>
<keyword id="KW-1185">Reference proteome</keyword>
<keyword id="KW-0687">Ribonucleoprotein</keyword>
<keyword id="KW-0689">Ribosomal protein</keyword>
<keyword id="KW-0694">RNA-binding</keyword>
<keyword id="KW-0699">rRNA-binding</keyword>
<name>RL2_BDEBA</name>
<evidence type="ECO:0000255" key="1">
    <source>
        <dbReference type="HAMAP-Rule" id="MF_01320"/>
    </source>
</evidence>
<evidence type="ECO:0000256" key="2">
    <source>
        <dbReference type="SAM" id="MobiDB-lite"/>
    </source>
</evidence>
<evidence type="ECO:0000305" key="3"/>